<gene>
    <name evidence="1" type="primary">erpA</name>
    <name type="ordered locus">FTH_1486</name>
</gene>
<sequence length="116" mass="12658">MSEVVQSVDPINFTEAASLKVKELIEEEGDNSLSLRVYITGGGCSGFQYAFAFDNEVKEDDMVITKNGVRLLVDSMSFQYLVGADVDYKDDVEGAYFVIRNPNAKTTCGCGSSFSV</sequence>
<keyword id="KW-0408">Iron</keyword>
<keyword id="KW-0411">Iron-sulfur</keyword>
<keyword id="KW-0479">Metal-binding</keyword>
<accession>Q0BKU2</accession>
<dbReference type="EMBL" id="CP000437">
    <property type="protein sequence ID" value="ABI83292.1"/>
    <property type="molecule type" value="Genomic_DNA"/>
</dbReference>
<dbReference type="RefSeq" id="WP_003016875.1">
    <property type="nucleotide sequence ID" value="NC_017463.1"/>
</dbReference>
<dbReference type="SMR" id="Q0BKU2"/>
<dbReference type="GeneID" id="75263905"/>
<dbReference type="KEGG" id="fth:FTH_1486"/>
<dbReference type="GO" id="GO:0051537">
    <property type="term" value="F:2 iron, 2 sulfur cluster binding"/>
    <property type="evidence" value="ECO:0007669"/>
    <property type="project" value="TreeGrafter"/>
</dbReference>
<dbReference type="GO" id="GO:0051539">
    <property type="term" value="F:4 iron, 4 sulfur cluster binding"/>
    <property type="evidence" value="ECO:0007669"/>
    <property type="project" value="TreeGrafter"/>
</dbReference>
<dbReference type="GO" id="GO:0005506">
    <property type="term" value="F:iron ion binding"/>
    <property type="evidence" value="ECO:0007669"/>
    <property type="project" value="UniProtKB-UniRule"/>
</dbReference>
<dbReference type="GO" id="GO:0016226">
    <property type="term" value="P:iron-sulfur cluster assembly"/>
    <property type="evidence" value="ECO:0007669"/>
    <property type="project" value="UniProtKB-UniRule"/>
</dbReference>
<dbReference type="FunFam" id="2.60.300.12:FF:000002">
    <property type="entry name" value="Iron-sulfur cluster insertion protein ErpA"/>
    <property type="match status" value="1"/>
</dbReference>
<dbReference type="Gene3D" id="2.60.300.12">
    <property type="entry name" value="HesB-like domain"/>
    <property type="match status" value="1"/>
</dbReference>
<dbReference type="HAMAP" id="MF_01380">
    <property type="entry name" value="Fe_S_insert_ErpA"/>
    <property type="match status" value="1"/>
</dbReference>
<dbReference type="InterPro" id="IPR000361">
    <property type="entry name" value="FeS_biogenesis"/>
</dbReference>
<dbReference type="InterPro" id="IPR016092">
    <property type="entry name" value="FeS_cluster_insertion"/>
</dbReference>
<dbReference type="InterPro" id="IPR017870">
    <property type="entry name" value="FeS_cluster_insertion_CS"/>
</dbReference>
<dbReference type="InterPro" id="IPR023063">
    <property type="entry name" value="FeS_cluster_insertion_RrpA"/>
</dbReference>
<dbReference type="InterPro" id="IPR035903">
    <property type="entry name" value="HesB-like_dom_sf"/>
</dbReference>
<dbReference type="NCBIfam" id="TIGR00049">
    <property type="entry name" value="iron-sulfur cluster assembly accessory protein"/>
    <property type="match status" value="1"/>
</dbReference>
<dbReference type="NCBIfam" id="NF010147">
    <property type="entry name" value="PRK13623.1"/>
    <property type="match status" value="1"/>
</dbReference>
<dbReference type="PANTHER" id="PTHR43011">
    <property type="entry name" value="IRON-SULFUR CLUSTER ASSEMBLY 2 HOMOLOG, MITOCHONDRIAL"/>
    <property type="match status" value="1"/>
</dbReference>
<dbReference type="PANTHER" id="PTHR43011:SF1">
    <property type="entry name" value="IRON-SULFUR CLUSTER ASSEMBLY 2 HOMOLOG, MITOCHONDRIAL"/>
    <property type="match status" value="1"/>
</dbReference>
<dbReference type="Pfam" id="PF01521">
    <property type="entry name" value="Fe-S_biosyn"/>
    <property type="match status" value="1"/>
</dbReference>
<dbReference type="SUPFAM" id="SSF89360">
    <property type="entry name" value="HesB-like domain"/>
    <property type="match status" value="1"/>
</dbReference>
<dbReference type="PROSITE" id="PS01152">
    <property type="entry name" value="HESB"/>
    <property type="match status" value="1"/>
</dbReference>
<feature type="chain" id="PRO_0000311483" description="Iron-sulfur cluster insertion protein ErpA">
    <location>
        <begin position="1"/>
        <end position="116"/>
    </location>
</feature>
<feature type="binding site" evidence="1">
    <location>
        <position position="44"/>
    </location>
    <ligand>
        <name>iron-sulfur cluster</name>
        <dbReference type="ChEBI" id="CHEBI:30408"/>
    </ligand>
</feature>
<feature type="binding site" evidence="1">
    <location>
        <position position="108"/>
    </location>
    <ligand>
        <name>iron-sulfur cluster</name>
        <dbReference type="ChEBI" id="CHEBI:30408"/>
    </ligand>
</feature>
<feature type="binding site" evidence="1">
    <location>
        <position position="110"/>
    </location>
    <ligand>
        <name>iron-sulfur cluster</name>
        <dbReference type="ChEBI" id="CHEBI:30408"/>
    </ligand>
</feature>
<comment type="function">
    <text evidence="1">Required for insertion of 4Fe-4S clusters for at least IspG.</text>
</comment>
<comment type="cofactor">
    <cofactor evidence="1">
        <name>iron-sulfur cluster</name>
        <dbReference type="ChEBI" id="CHEBI:30408"/>
    </cofactor>
    <text evidence="1">Binds 1 iron-sulfur cluster per subunit.</text>
</comment>
<comment type="subunit">
    <text evidence="1">Homodimer.</text>
</comment>
<comment type="similarity">
    <text evidence="1">Belongs to the HesB/IscA family.</text>
</comment>
<name>ERPA_FRATO</name>
<reference key="1">
    <citation type="journal article" date="2006" name="J. Bacteriol.">
        <title>Chromosome rearrangement and diversification of Francisella tularensis revealed by the type B (OSU18) genome sequence.</title>
        <authorList>
            <person name="Petrosino J.F."/>
            <person name="Xiang Q."/>
            <person name="Karpathy S.E."/>
            <person name="Jiang H."/>
            <person name="Yerrapragada S."/>
            <person name="Liu Y."/>
            <person name="Gioia J."/>
            <person name="Hemphill L."/>
            <person name="Gonzalez A."/>
            <person name="Raghavan T.M."/>
            <person name="Uzman A."/>
            <person name="Fox G.E."/>
            <person name="Highlander S."/>
            <person name="Reichard M."/>
            <person name="Morton R.J."/>
            <person name="Clinkenbeard K.D."/>
            <person name="Weinstock G.M."/>
        </authorList>
    </citation>
    <scope>NUCLEOTIDE SEQUENCE [LARGE SCALE GENOMIC DNA]</scope>
    <source>
        <strain>OSU18</strain>
    </source>
</reference>
<proteinExistence type="inferred from homology"/>
<evidence type="ECO:0000255" key="1">
    <source>
        <dbReference type="HAMAP-Rule" id="MF_01380"/>
    </source>
</evidence>
<organism>
    <name type="scientific">Francisella tularensis subsp. holarctica (strain OSU18)</name>
    <dbReference type="NCBI Taxonomy" id="393011"/>
    <lineage>
        <taxon>Bacteria</taxon>
        <taxon>Pseudomonadati</taxon>
        <taxon>Pseudomonadota</taxon>
        <taxon>Gammaproteobacteria</taxon>
        <taxon>Thiotrichales</taxon>
        <taxon>Francisellaceae</taxon>
        <taxon>Francisella</taxon>
    </lineage>
</organism>
<protein>
    <recommendedName>
        <fullName evidence="1">Iron-sulfur cluster insertion protein ErpA</fullName>
    </recommendedName>
</protein>